<keyword id="KW-0687">Ribonucleoprotein</keyword>
<keyword id="KW-0689">Ribosomal protein</keyword>
<keyword id="KW-0694">RNA-binding</keyword>
<keyword id="KW-0699">rRNA-binding</keyword>
<organism>
    <name type="scientific">Actinobacillus pleuropneumoniae serotype 7 (strain AP76)</name>
    <dbReference type="NCBI Taxonomy" id="537457"/>
    <lineage>
        <taxon>Bacteria</taxon>
        <taxon>Pseudomonadati</taxon>
        <taxon>Pseudomonadota</taxon>
        <taxon>Gammaproteobacteria</taxon>
        <taxon>Pasteurellales</taxon>
        <taxon>Pasteurellaceae</taxon>
        <taxon>Actinobacillus</taxon>
    </lineage>
</organism>
<accession>B3GZE5</accession>
<gene>
    <name evidence="1" type="primary">rplU</name>
    <name type="ordered locus">APP7_2086</name>
</gene>
<name>RL21_ACTP7</name>
<protein>
    <recommendedName>
        <fullName evidence="1">Large ribosomal subunit protein bL21</fullName>
    </recommendedName>
    <alternativeName>
        <fullName evidence="2">50S ribosomal protein L21</fullName>
    </alternativeName>
</protein>
<comment type="function">
    <text evidence="1">This protein binds to 23S rRNA in the presence of protein L20.</text>
</comment>
<comment type="subunit">
    <text evidence="1">Part of the 50S ribosomal subunit. Contacts protein L20.</text>
</comment>
<comment type="similarity">
    <text evidence="1">Belongs to the bacterial ribosomal protein bL21 family.</text>
</comment>
<feature type="chain" id="PRO_1000143747" description="Large ribosomal subunit protein bL21">
    <location>
        <begin position="1"/>
        <end position="103"/>
    </location>
</feature>
<dbReference type="EMBL" id="CP001091">
    <property type="protein sequence ID" value="ACE62738.1"/>
    <property type="molecule type" value="Genomic_DNA"/>
</dbReference>
<dbReference type="RefSeq" id="WP_012478616.1">
    <property type="nucleotide sequence ID" value="NC_010939.1"/>
</dbReference>
<dbReference type="SMR" id="B3GZE5"/>
<dbReference type="KEGG" id="apa:APP7_2086"/>
<dbReference type="HOGENOM" id="CLU_061463_3_2_6"/>
<dbReference type="Proteomes" id="UP000001226">
    <property type="component" value="Chromosome"/>
</dbReference>
<dbReference type="GO" id="GO:0005737">
    <property type="term" value="C:cytoplasm"/>
    <property type="evidence" value="ECO:0007669"/>
    <property type="project" value="UniProtKB-ARBA"/>
</dbReference>
<dbReference type="GO" id="GO:1990904">
    <property type="term" value="C:ribonucleoprotein complex"/>
    <property type="evidence" value="ECO:0007669"/>
    <property type="project" value="UniProtKB-KW"/>
</dbReference>
<dbReference type="GO" id="GO:0005840">
    <property type="term" value="C:ribosome"/>
    <property type="evidence" value="ECO:0007669"/>
    <property type="project" value="UniProtKB-KW"/>
</dbReference>
<dbReference type="GO" id="GO:0019843">
    <property type="term" value="F:rRNA binding"/>
    <property type="evidence" value="ECO:0007669"/>
    <property type="project" value="UniProtKB-UniRule"/>
</dbReference>
<dbReference type="GO" id="GO:0003735">
    <property type="term" value="F:structural constituent of ribosome"/>
    <property type="evidence" value="ECO:0007669"/>
    <property type="project" value="InterPro"/>
</dbReference>
<dbReference type="GO" id="GO:0006412">
    <property type="term" value="P:translation"/>
    <property type="evidence" value="ECO:0007669"/>
    <property type="project" value="UniProtKB-UniRule"/>
</dbReference>
<dbReference type="HAMAP" id="MF_01363">
    <property type="entry name" value="Ribosomal_bL21"/>
    <property type="match status" value="1"/>
</dbReference>
<dbReference type="InterPro" id="IPR028909">
    <property type="entry name" value="bL21-like"/>
</dbReference>
<dbReference type="InterPro" id="IPR036164">
    <property type="entry name" value="bL21-like_sf"/>
</dbReference>
<dbReference type="InterPro" id="IPR001787">
    <property type="entry name" value="Ribosomal_bL21"/>
</dbReference>
<dbReference type="InterPro" id="IPR018258">
    <property type="entry name" value="Ribosomal_bL21_CS"/>
</dbReference>
<dbReference type="NCBIfam" id="TIGR00061">
    <property type="entry name" value="L21"/>
    <property type="match status" value="1"/>
</dbReference>
<dbReference type="PANTHER" id="PTHR21349">
    <property type="entry name" value="50S RIBOSOMAL PROTEIN L21"/>
    <property type="match status" value="1"/>
</dbReference>
<dbReference type="PANTHER" id="PTHR21349:SF0">
    <property type="entry name" value="LARGE RIBOSOMAL SUBUNIT PROTEIN BL21M"/>
    <property type="match status" value="1"/>
</dbReference>
<dbReference type="Pfam" id="PF00829">
    <property type="entry name" value="Ribosomal_L21p"/>
    <property type="match status" value="1"/>
</dbReference>
<dbReference type="SUPFAM" id="SSF141091">
    <property type="entry name" value="L21p-like"/>
    <property type="match status" value="1"/>
</dbReference>
<dbReference type="PROSITE" id="PS01169">
    <property type="entry name" value="RIBOSOMAL_L21"/>
    <property type="match status" value="1"/>
</dbReference>
<evidence type="ECO:0000255" key="1">
    <source>
        <dbReference type="HAMAP-Rule" id="MF_01363"/>
    </source>
</evidence>
<evidence type="ECO:0000305" key="2"/>
<proteinExistence type="inferred from homology"/>
<sequence>MYAVFQSGGKQHRVSEGQVVRLEKLEIATGEKFEFDSVLMVVNGEDVKIGAPVVAGAKVVAEVVAQGRGDKVKIVKFRRRKHSRKQQGHRQWFTEVKITGIQA</sequence>
<reference key="1">
    <citation type="submission" date="2008-06" db="EMBL/GenBank/DDBJ databases">
        <title>Genome and proteome analysis of A. pleuropneumoniae serotype 7.</title>
        <authorList>
            <person name="Linke B."/>
            <person name="Buettner F."/>
            <person name="Martinez-Arias R."/>
            <person name="Goesmann A."/>
            <person name="Baltes N."/>
            <person name="Tegetmeyer H."/>
            <person name="Singh M."/>
            <person name="Gerlach G.F."/>
        </authorList>
    </citation>
    <scope>NUCLEOTIDE SEQUENCE [LARGE SCALE GENOMIC DNA]</scope>
    <source>
        <strain>AP76</strain>
    </source>
</reference>